<keyword id="KW-0963">Cytoplasm</keyword>
<keyword id="KW-0342">GTP-binding</keyword>
<keyword id="KW-0436">Ligase</keyword>
<keyword id="KW-0460">Magnesium</keyword>
<keyword id="KW-0479">Metal-binding</keyword>
<keyword id="KW-0547">Nucleotide-binding</keyword>
<keyword id="KW-0658">Purine biosynthesis</keyword>
<evidence type="ECO:0000255" key="1">
    <source>
        <dbReference type="HAMAP-Rule" id="MF_00011"/>
    </source>
</evidence>
<sequence>MGNNVVVLGTQWGDEGKGKIVDLLTERAKYVVRYQGGHNAGHTLVINGEKTVLHLIPSGILRENVTSIIGNGVVLSPAALMKEMKELEDRGIPVRERLLLSEACPLILDYHVALDNACEKARGAKAIGTTGRGIGPAYEDKVARRGLRVGDLFDKETFAEKLKEVMEYHNFQLVNYYKAEAVDYQKVLDDTMAVADILTSMVVDVSDLLDQARQRGDFVMFEGAQGTLLDIDHGTYPYVTSSNTTAGGVATGSGLGPRYVDYVLGILKAYSTRVGAGPFPTELFDETGEFLCKQGNEYGATTGRRRRTGWLDTVAVRRAVQLNSLSGFCLTKLDVLDGLKEVKLCVAYRMPDGREVTTTPLAADDWKGVEPIYETMPGWSESTFGVKDRSGLPQAALNYIKRIEELTGVPIDIISTGPDRTETMILRDPFDA</sequence>
<protein>
    <recommendedName>
        <fullName evidence="1">Adenylosuccinate synthetase</fullName>
        <shortName evidence="1">AMPSase</shortName>
        <shortName evidence="1">AdSS</shortName>
        <ecNumber evidence="1">6.3.4.4</ecNumber>
    </recommendedName>
    <alternativeName>
        <fullName evidence="1">IMP--aspartate ligase</fullName>
    </alternativeName>
</protein>
<comment type="function">
    <text evidence="1">Plays an important role in the de novo pathway of purine nucleotide biosynthesis. Catalyzes the first committed step in the biosynthesis of AMP from IMP.</text>
</comment>
<comment type="catalytic activity">
    <reaction evidence="1">
        <text>IMP + L-aspartate + GTP = N(6)-(1,2-dicarboxyethyl)-AMP + GDP + phosphate + 2 H(+)</text>
        <dbReference type="Rhea" id="RHEA:15753"/>
        <dbReference type="ChEBI" id="CHEBI:15378"/>
        <dbReference type="ChEBI" id="CHEBI:29991"/>
        <dbReference type="ChEBI" id="CHEBI:37565"/>
        <dbReference type="ChEBI" id="CHEBI:43474"/>
        <dbReference type="ChEBI" id="CHEBI:57567"/>
        <dbReference type="ChEBI" id="CHEBI:58053"/>
        <dbReference type="ChEBI" id="CHEBI:58189"/>
        <dbReference type="EC" id="6.3.4.4"/>
    </reaction>
</comment>
<comment type="cofactor">
    <cofactor evidence="1">
        <name>Mg(2+)</name>
        <dbReference type="ChEBI" id="CHEBI:18420"/>
    </cofactor>
    <text evidence="1">Binds 1 Mg(2+) ion per subunit.</text>
</comment>
<comment type="pathway">
    <text evidence="1">Purine metabolism; AMP biosynthesis via de novo pathway; AMP from IMP: step 1/2.</text>
</comment>
<comment type="subunit">
    <text evidence="1">Homodimer.</text>
</comment>
<comment type="subcellular location">
    <subcellularLocation>
        <location evidence="1">Cytoplasm</location>
    </subcellularLocation>
</comment>
<comment type="similarity">
    <text evidence="1">Belongs to the adenylosuccinate synthetase family.</text>
</comment>
<name>PURA_SALCH</name>
<reference key="1">
    <citation type="journal article" date="2005" name="Nucleic Acids Res.">
        <title>The genome sequence of Salmonella enterica serovar Choleraesuis, a highly invasive and resistant zoonotic pathogen.</title>
        <authorList>
            <person name="Chiu C.-H."/>
            <person name="Tang P."/>
            <person name="Chu C."/>
            <person name="Hu S."/>
            <person name="Bao Q."/>
            <person name="Yu J."/>
            <person name="Chou Y.-Y."/>
            <person name="Wang H.-S."/>
            <person name="Lee Y.-S."/>
        </authorList>
    </citation>
    <scope>NUCLEOTIDE SEQUENCE [LARGE SCALE GENOMIC DNA]</scope>
    <source>
        <strain>SC-B67</strain>
    </source>
</reference>
<proteinExistence type="inferred from homology"/>
<gene>
    <name evidence="1" type="primary">purA</name>
    <name type="ordered locus">SCH_4242</name>
</gene>
<feature type="chain" id="PRO_0000224316" description="Adenylosuccinate synthetase">
    <location>
        <begin position="1"/>
        <end position="432"/>
    </location>
</feature>
<feature type="active site" description="Proton acceptor" evidence="1">
    <location>
        <position position="14"/>
    </location>
</feature>
<feature type="active site" description="Proton donor" evidence="1">
    <location>
        <position position="42"/>
    </location>
</feature>
<feature type="binding site" evidence="1">
    <location>
        <begin position="13"/>
        <end position="19"/>
    </location>
    <ligand>
        <name>GTP</name>
        <dbReference type="ChEBI" id="CHEBI:37565"/>
    </ligand>
</feature>
<feature type="binding site" description="in other chain" evidence="1">
    <location>
        <begin position="14"/>
        <end position="17"/>
    </location>
    <ligand>
        <name>IMP</name>
        <dbReference type="ChEBI" id="CHEBI:58053"/>
        <note>ligand shared between dimeric partners</note>
    </ligand>
</feature>
<feature type="binding site" evidence="1">
    <location>
        <position position="14"/>
    </location>
    <ligand>
        <name>Mg(2+)</name>
        <dbReference type="ChEBI" id="CHEBI:18420"/>
    </ligand>
</feature>
<feature type="binding site" description="in other chain" evidence="1">
    <location>
        <begin position="39"/>
        <end position="42"/>
    </location>
    <ligand>
        <name>IMP</name>
        <dbReference type="ChEBI" id="CHEBI:58053"/>
        <note>ligand shared between dimeric partners</note>
    </ligand>
</feature>
<feature type="binding site" evidence="1">
    <location>
        <begin position="41"/>
        <end position="43"/>
    </location>
    <ligand>
        <name>GTP</name>
        <dbReference type="ChEBI" id="CHEBI:37565"/>
    </ligand>
</feature>
<feature type="binding site" evidence="1">
    <location>
        <position position="41"/>
    </location>
    <ligand>
        <name>Mg(2+)</name>
        <dbReference type="ChEBI" id="CHEBI:18420"/>
    </ligand>
</feature>
<feature type="binding site" description="in other chain" evidence="1">
    <location>
        <position position="130"/>
    </location>
    <ligand>
        <name>IMP</name>
        <dbReference type="ChEBI" id="CHEBI:58053"/>
        <note>ligand shared between dimeric partners</note>
    </ligand>
</feature>
<feature type="binding site" evidence="1">
    <location>
        <position position="144"/>
    </location>
    <ligand>
        <name>IMP</name>
        <dbReference type="ChEBI" id="CHEBI:58053"/>
        <note>ligand shared between dimeric partners</note>
    </ligand>
</feature>
<feature type="binding site" description="in other chain" evidence="1">
    <location>
        <position position="225"/>
    </location>
    <ligand>
        <name>IMP</name>
        <dbReference type="ChEBI" id="CHEBI:58053"/>
        <note>ligand shared between dimeric partners</note>
    </ligand>
</feature>
<feature type="binding site" description="in other chain" evidence="1">
    <location>
        <position position="240"/>
    </location>
    <ligand>
        <name>IMP</name>
        <dbReference type="ChEBI" id="CHEBI:58053"/>
        <note>ligand shared between dimeric partners</note>
    </ligand>
</feature>
<feature type="binding site" evidence="1">
    <location>
        <begin position="300"/>
        <end position="306"/>
    </location>
    <ligand>
        <name>substrate</name>
    </ligand>
</feature>
<feature type="binding site" description="in other chain" evidence="1">
    <location>
        <position position="304"/>
    </location>
    <ligand>
        <name>IMP</name>
        <dbReference type="ChEBI" id="CHEBI:58053"/>
        <note>ligand shared between dimeric partners</note>
    </ligand>
</feature>
<feature type="binding site" evidence="1">
    <location>
        <position position="306"/>
    </location>
    <ligand>
        <name>GTP</name>
        <dbReference type="ChEBI" id="CHEBI:37565"/>
    </ligand>
</feature>
<feature type="binding site" evidence="1">
    <location>
        <begin position="332"/>
        <end position="334"/>
    </location>
    <ligand>
        <name>GTP</name>
        <dbReference type="ChEBI" id="CHEBI:37565"/>
    </ligand>
</feature>
<feature type="binding site" evidence="1">
    <location>
        <begin position="415"/>
        <end position="417"/>
    </location>
    <ligand>
        <name>GTP</name>
        <dbReference type="ChEBI" id="CHEBI:37565"/>
    </ligand>
</feature>
<organism>
    <name type="scientific">Salmonella choleraesuis (strain SC-B67)</name>
    <dbReference type="NCBI Taxonomy" id="321314"/>
    <lineage>
        <taxon>Bacteria</taxon>
        <taxon>Pseudomonadati</taxon>
        <taxon>Pseudomonadota</taxon>
        <taxon>Gammaproteobacteria</taxon>
        <taxon>Enterobacterales</taxon>
        <taxon>Enterobacteriaceae</taxon>
        <taxon>Salmonella</taxon>
    </lineage>
</organism>
<accession>Q57GL4</accession>
<dbReference type="EC" id="6.3.4.4" evidence="1"/>
<dbReference type="EMBL" id="AE017220">
    <property type="protein sequence ID" value="AAX68148.1"/>
    <property type="molecule type" value="Genomic_DNA"/>
</dbReference>
<dbReference type="RefSeq" id="WP_001541363.1">
    <property type="nucleotide sequence ID" value="NC_006905.1"/>
</dbReference>
<dbReference type="SMR" id="Q57GL4"/>
<dbReference type="KEGG" id="sec:SCH_4242"/>
<dbReference type="HOGENOM" id="CLU_029848_0_0_6"/>
<dbReference type="UniPathway" id="UPA00075">
    <property type="reaction ID" value="UER00335"/>
</dbReference>
<dbReference type="Proteomes" id="UP000000538">
    <property type="component" value="Chromosome"/>
</dbReference>
<dbReference type="GO" id="GO:0005737">
    <property type="term" value="C:cytoplasm"/>
    <property type="evidence" value="ECO:0007669"/>
    <property type="project" value="UniProtKB-SubCell"/>
</dbReference>
<dbReference type="GO" id="GO:0004019">
    <property type="term" value="F:adenylosuccinate synthase activity"/>
    <property type="evidence" value="ECO:0007669"/>
    <property type="project" value="UniProtKB-UniRule"/>
</dbReference>
<dbReference type="GO" id="GO:0005525">
    <property type="term" value="F:GTP binding"/>
    <property type="evidence" value="ECO:0007669"/>
    <property type="project" value="UniProtKB-UniRule"/>
</dbReference>
<dbReference type="GO" id="GO:0000287">
    <property type="term" value="F:magnesium ion binding"/>
    <property type="evidence" value="ECO:0007669"/>
    <property type="project" value="UniProtKB-UniRule"/>
</dbReference>
<dbReference type="GO" id="GO:0044208">
    <property type="term" value="P:'de novo' AMP biosynthetic process"/>
    <property type="evidence" value="ECO:0007669"/>
    <property type="project" value="UniProtKB-UniRule"/>
</dbReference>
<dbReference type="GO" id="GO:0046040">
    <property type="term" value="P:IMP metabolic process"/>
    <property type="evidence" value="ECO:0007669"/>
    <property type="project" value="TreeGrafter"/>
</dbReference>
<dbReference type="CDD" id="cd03108">
    <property type="entry name" value="AdSS"/>
    <property type="match status" value="1"/>
</dbReference>
<dbReference type="FunFam" id="1.10.300.10:FF:000001">
    <property type="entry name" value="Adenylosuccinate synthetase"/>
    <property type="match status" value="1"/>
</dbReference>
<dbReference type="FunFam" id="3.90.170.10:FF:000001">
    <property type="entry name" value="Adenylosuccinate synthetase"/>
    <property type="match status" value="1"/>
</dbReference>
<dbReference type="Gene3D" id="3.40.440.10">
    <property type="entry name" value="Adenylosuccinate Synthetase, subunit A, domain 1"/>
    <property type="match status" value="1"/>
</dbReference>
<dbReference type="Gene3D" id="1.10.300.10">
    <property type="entry name" value="Adenylosuccinate Synthetase, subunit A, domain 2"/>
    <property type="match status" value="1"/>
</dbReference>
<dbReference type="Gene3D" id="3.90.170.10">
    <property type="entry name" value="Adenylosuccinate Synthetase, subunit A, domain 3"/>
    <property type="match status" value="1"/>
</dbReference>
<dbReference type="HAMAP" id="MF_00011">
    <property type="entry name" value="Adenylosucc_synth"/>
    <property type="match status" value="1"/>
</dbReference>
<dbReference type="InterPro" id="IPR018220">
    <property type="entry name" value="Adenylosuccin_syn_GTP-bd"/>
</dbReference>
<dbReference type="InterPro" id="IPR033128">
    <property type="entry name" value="Adenylosuccin_syn_Lys_AS"/>
</dbReference>
<dbReference type="InterPro" id="IPR042109">
    <property type="entry name" value="Adenylosuccinate_synth_dom1"/>
</dbReference>
<dbReference type="InterPro" id="IPR042110">
    <property type="entry name" value="Adenylosuccinate_synth_dom2"/>
</dbReference>
<dbReference type="InterPro" id="IPR042111">
    <property type="entry name" value="Adenylosuccinate_synth_dom3"/>
</dbReference>
<dbReference type="InterPro" id="IPR001114">
    <property type="entry name" value="Adenylosuccinate_synthetase"/>
</dbReference>
<dbReference type="InterPro" id="IPR027417">
    <property type="entry name" value="P-loop_NTPase"/>
</dbReference>
<dbReference type="NCBIfam" id="NF002223">
    <property type="entry name" value="PRK01117.1"/>
    <property type="match status" value="1"/>
</dbReference>
<dbReference type="NCBIfam" id="TIGR00184">
    <property type="entry name" value="purA"/>
    <property type="match status" value="1"/>
</dbReference>
<dbReference type="PANTHER" id="PTHR11846">
    <property type="entry name" value="ADENYLOSUCCINATE SYNTHETASE"/>
    <property type="match status" value="1"/>
</dbReference>
<dbReference type="PANTHER" id="PTHR11846:SF0">
    <property type="entry name" value="ADENYLOSUCCINATE SYNTHETASE"/>
    <property type="match status" value="1"/>
</dbReference>
<dbReference type="Pfam" id="PF00709">
    <property type="entry name" value="Adenylsucc_synt"/>
    <property type="match status" value="1"/>
</dbReference>
<dbReference type="SMART" id="SM00788">
    <property type="entry name" value="Adenylsucc_synt"/>
    <property type="match status" value="1"/>
</dbReference>
<dbReference type="SUPFAM" id="SSF52540">
    <property type="entry name" value="P-loop containing nucleoside triphosphate hydrolases"/>
    <property type="match status" value="1"/>
</dbReference>
<dbReference type="PROSITE" id="PS01266">
    <property type="entry name" value="ADENYLOSUCCIN_SYN_1"/>
    <property type="match status" value="1"/>
</dbReference>
<dbReference type="PROSITE" id="PS00513">
    <property type="entry name" value="ADENYLOSUCCIN_SYN_2"/>
    <property type="match status" value="1"/>
</dbReference>